<proteinExistence type="inferred from homology"/>
<keyword id="KW-0997">Cell inner membrane</keyword>
<keyword id="KW-1003">Cell membrane</keyword>
<keyword id="KW-0472">Membrane</keyword>
<keyword id="KW-1185">Reference proteome</keyword>
<keyword id="KW-0762">Sugar transport</keyword>
<keyword id="KW-0812">Transmembrane</keyword>
<keyword id="KW-1133">Transmembrane helix</keyword>
<keyword id="KW-0813">Transport</keyword>
<gene>
    <name evidence="2" type="primary">sotB</name>
    <name type="synonym">pnuP</name>
    <name type="ordered locus">STM1522</name>
</gene>
<protein>
    <recommendedName>
        <fullName evidence="2">Probable sugar efflux transporter</fullName>
    </recommendedName>
</protein>
<accession>P58531</accession>
<comment type="function">
    <text evidence="2">Involved in the efflux of sugars. The physiological role may be the reduction of the intracellular concentration of toxic sugars or sugar metabolites.</text>
</comment>
<comment type="subcellular location">
    <subcellularLocation>
        <location evidence="2">Cell inner membrane</location>
        <topology evidence="2">Multi-pass membrane protein</topology>
    </subcellularLocation>
</comment>
<comment type="similarity">
    <text evidence="2">Belongs to the major facilitator superfamily. SotB (TC 2.A.1.2) family.</text>
</comment>
<organism>
    <name type="scientific">Salmonella typhimurium (strain LT2 / SGSC1412 / ATCC 700720)</name>
    <dbReference type="NCBI Taxonomy" id="99287"/>
    <lineage>
        <taxon>Bacteria</taxon>
        <taxon>Pseudomonadati</taxon>
        <taxon>Pseudomonadota</taxon>
        <taxon>Gammaproteobacteria</taxon>
        <taxon>Enterobacterales</taxon>
        <taxon>Enterobacteriaceae</taxon>
        <taxon>Salmonella</taxon>
    </lineage>
</organism>
<name>SOTB_SALTY</name>
<feature type="chain" id="PRO_0000209335" description="Probable sugar efflux transporter">
    <location>
        <begin position="1"/>
        <end position="396"/>
    </location>
</feature>
<feature type="topological domain" description="Cytoplasmic" evidence="1">
    <location>
        <begin position="1"/>
        <end position="14"/>
    </location>
</feature>
<feature type="transmembrane region" description="Helical" evidence="2">
    <location>
        <begin position="15"/>
        <end position="35"/>
    </location>
</feature>
<feature type="topological domain" description="Periplasmic" evidence="1">
    <location>
        <begin position="36"/>
        <end position="49"/>
    </location>
</feature>
<feature type="transmembrane region" description="Helical" evidence="2">
    <location>
        <begin position="50"/>
        <end position="70"/>
    </location>
</feature>
<feature type="topological domain" description="Cytoplasmic" evidence="1">
    <location>
        <begin position="71"/>
        <end position="80"/>
    </location>
</feature>
<feature type="transmembrane region" description="Helical" evidence="2">
    <location>
        <begin position="81"/>
        <end position="101"/>
    </location>
</feature>
<feature type="topological domain" description="Periplasmic" evidence="1">
    <location>
        <position position="102"/>
    </location>
</feature>
<feature type="transmembrane region" description="Helical" evidence="2">
    <location>
        <begin position="103"/>
        <end position="123"/>
    </location>
</feature>
<feature type="topological domain" description="Cytoplasmic" evidence="1">
    <location>
        <begin position="124"/>
        <end position="135"/>
    </location>
</feature>
<feature type="transmembrane region" description="Helical" evidence="2">
    <location>
        <begin position="136"/>
        <end position="156"/>
    </location>
</feature>
<feature type="topological domain" description="Periplasmic" evidence="1">
    <location>
        <begin position="157"/>
        <end position="168"/>
    </location>
</feature>
<feature type="transmembrane region" description="Helical" evidence="2">
    <location>
        <begin position="169"/>
        <end position="189"/>
    </location>
</feature>
<feature type="topological domain" description="Cytoplasmic" evidence="1">
    <location>
        <begin position="190"/>
        <end position="208"/>
    </location>
</feature>
<feature type="transmembrane region" description="Helical" evidence="2">
    <location>
        <begin position="209"/>
        <end position="229"/>
    </location>
</feature>
<feature type="topological domain" description="Periplasmic" evidence="1">
    <location>
        <begin position="230"/>
        <end position="245"/>
    </location>
</feature>
<feature type="transmembrane region" description="Helical" evidence="2">
    <location>
        <begin position="246"/>
        <end position="266"/>
    </location>
</feature>
<feature type="topological domain" description="Cytoplasmic" evidence="1">
    <location>
        <begin position="267"/>
        <end position="274"/>
    </location>
</feature>
<feature type="transmembrane region" description="Helical" evidence="2">
    <location>
        <begin position="275"/>
        <end position="295"/>
    </location>
</feature>
<feature type="topological domain" description="Periplasmic" evidence="1">
    <location>
        <begin position="296"/>
        <end position="300"/>
    </location>
</feature>
<feature type="transmembrane region" description="Helical" evidence="2">
    <location>
        <begin position="301"/>
        <end position="321"/>
    </location>
</feature>
<feature type="topological domain" description="Cytoplasmic" evidence="1">
    <location>
        <begin position="322"/>
        <end position="332"/>
    </location>
</feature>
<feature type="transmembrane region" description="Helical" evidence="2">
    <location>
        <begin position="333"/>
        <end position="353"/>
    </location>
</feature>
<feature type="topological domain" description="Periplasmic" evidence="1">
    <location>
        <begin position="354"/>
        <end position="363"/>
    </location>
</feature>
<feature type="transmembrane region" description="Helical" evidence="2">
    <location>
        <begin position="364"/>
        <end position="384"/>
    </location>
</feature>
<feature type="topological domain" description="Cytoplasmic" evidence="1">
    <location>
        <begin position="385"/>
        <end position="396"/>
    </location>
</feature>
<feature type="sequence variant" description="In pnuP*144." evidence="3">
    <original>V</original>
    <variation>G</variation>
    <location>
        <position position="151"/>
    </location>
</feature>
<reference key="1">
    <citation type="submission" date="2001-10" db="EMBL/GenBank/DDBJ databases">
        <title>Alteration of PnuD, a putative nucleoside transporter, or YdeA opens a route of nicotinamide mononucleotide assimilation in Salmonella enterica serovar Typhimurium.</title>
        <authorList>
            <person name="Jeong H."/>
            <person name="Zhu N."/>
            <person name="Roth J.R."/>
        </authorList>
    </citation>
    <scope>NUCLEOTIDE SEQUENCE [GENOMIC DNA]</scope>
    <scope>VARIANT GLY-151</scope>
</reference>
<reference key="2">
    <citation type="journal article" date="2001" name="Nature">
        <title>Complete genome sequence of Salmonella enterica serovar Typhimurium LT2.</title>
        <authorList>
            <person name="McClelland M."/>
            <person name="Sanderson K.E."/>
            <person name="Spieth J."/>
            <person name="Clifton S.W."/>
            <person name="Latreille P."/>
            <person name="Courtney L."/>
            <person name="Porwollik S."/>
            <person name="Ali J."/>
            <person name="Dante M."/>
            <person name="Du F."/>
            <person name="Hou S."/>
            <person name="Layman D."/>
            <person name="Leonard S."/>
            <person name="Nguyen C."/>
            <person name="Scott K."/>
            <person name="Holmes A."/>
            <person name="Grewal N."/>
            <person name="Mulvaney E."/>
            <person name="Ryan E."/>
            <person name="Sun H."/>
            <person name="Florea L."/>
            <person name="Miller W."/>
            <person name="Stoneking T."/>
            <person name="Nhan M."/>
            <person name="Waterston R."/>
            <person name="Wilson R.K."/>
        </authorList>
    </citation>
    <scope>NUCLEOTIDE SEQUENCE [LARGE SCALE GENOMIC DNA]</scope>
    <source>
        <strain>LT2 / SGSC1412 / ATCC 700720</strain>
    </source>
</reference>
<sequence>MTINPVSRKVAWLRVVTLAIAAFIFNTTEFVPVGLLSDIAESFHMQTAQVGIMLTIYAWVVAVMSLPFMLLTSQMERRKLLIYLFVLFIASHVLSFLAWNFTVLVISRIGIAFAHAIFWSITASLAIRLAPAGKRAQALSLIATGTALAMVLGLPIGRVVGQYFGWRTTFFAIGMGALITLLCLIKLLPKLPSEHSGSLKSLPLLFRRPALMSLYVLTVVVVTAHYTAYSYIEPFVQNVAGLSANFATVLLLILGGAGIIGSLVFGKLGNRHASSLVSIAIALLVVCLLLLLPAAESEAHLAILSIFWGIAIMVIGLGMQVKVLALAPDATDVAMALFSGIFNIGIGAGALVGNQVSLHWSMSAIGYIGAIPACAALVWAVLIFRKWPVTLEEQPH</sequence>
<evidence type="ECO:0000255" key="1"/>
<evidence type="ECO:0000255" key="2">
    <source>
        <dbReference type="HAMAP-Rule" id="MF_00517"/>
    </source>
</evidence>
<evidence type="ECO:0000269" key="3">
    <source ref="1"/>
</evidence>
<dbReference type="EMBL" id="AF440748">
    <property type="protein sequence ID" value="AAL33645.1"/>
    <property type="molecule type" value="Genomic_DNA"/>
</dbReference>
<dbReference type="EMBL" id="AE006468">
    <property type="protein sequence ID" value="AAL20441.1"/>
    <property type="molecule type" value="Genomic_DNA"/>
</dbReference>
<dbReference type="RefSeq" id="WP_000154625.1">
    <property type="nucleotide sequence ID" value="NC_003197.2"/>
</dbReference>
<dbReference type="SMR" id="P58531"/>
<dbReference type="STRING" id="99287.STM1522"/>
<dbReference type="PaxDb" id="99287-STM1522"/>
<dbReference type="KEGG" id="stm:STM1522"/>
<dbReference type="PATRIC" id="fig|99287.12.peg.1610"/>
<dbReference type="HOGENOM" id="CLU_001265_61_1_6"/>
<dbReference type="OMA" id="AFQVGIM"/>
<dbReference type="PhylomeDB" id="P58531"/>
<dbReference type="BioCyc" id="SENT99287:STM1522-MONOMER"/>
<dbReference type="Proteomes" id="UP000001014">
    <property type="component" value="Chromosome"/>
</dbReference>
<dbReference type="GO" id="GO:0005886">
    <property type="term" value="C:plasma membrane"/>
    <property type="evidence" value="ECO:0000318"/>
    <property type="project" value="GO_Central"/>
</dbReference>
<dbReference type="GO" id="GO:0015144">
    <property type="term" value="F:carbohydrate transmembrane transporter activity"/>
    <property type="evidence" value="ECO:0007669"/>
    <property type="project" value="UniProtKB-UniRule"/>
</dbReference>
<dbReference type="GO" id="GO:0022857">
    <property type="term" value="F:transmembrane transporter activity"/>
    <property type="evidence" value="ECO:0000318"/>
    <property type="project" value="GO_Central"/>
</dbReference>
<dbReference type="GO" id="GO:0055085">
    <property type="term" value="P:transmembrane transport"/>
    <property type="evidence" value="ECO:0000318"/>
    <property type="project" value="GO_Central"/>
</dbReference>
<dbReference type="CDD" id="cd17324">
    <property type="entry name" value="MFS_NepI_like"/>
    <property type="match status" value="1"/>
</dbReference>
<dbReference type="Gene3D" id="1.20.1250.20">
    <property type="entry name" value="MFS general substrate transporter like domains"/>
    <property type="match status" value="1"/>
</dbReference>
<dbReference type="HAMAP" id="MF_00517">
    <property type="entry name" value="MFS_SotB"/>
    <property type="match status" value="1"/>
</dbReference>
<dbReference type="InterPro" id="IPR011701">
    <property type="entry name" value="MFS"/>
</dbReference>
<dbReference type="InterPro" id="IPR020846">
    <property type="entry name" value="MFS_dom"/>
</dbReference>
<dbReference type="InterPro" id="IPR050189">
    <property type="entry name" value="MFS_Efflux_Transporters"/>
</dbReference>
<dbReference type="InterPro" id="IPR036259">
    <property type="entry name" value="MFS_trans_sf"/>
</dbReference>
<dbReference type="InterPro" id="IPR023495">
    <property type="entry name" value="Sugar_effux_transptr_put"/>
</dbReference>
<dbReference type="NCBIfam" id="NF002921">
    <property type="entry name" value="PRK03545.1"/>
    <property type="match status" value="1"/>
</dbReference>
<dbReference type="PANTHER" id="PTHR43124">
    <property type="entry name" value="PURINE EFFLUX PUMP PBUE"/>
    <property type="match status" value="1"/>
</dbReference>
<dbReference type="PANTHER" id="PTHR43124:SF4">
    <property type="entry name" value="SUGAR EFFLUX TRANSPORTER"/>
    <property type="match status" value="1"/>
</dbReference>
<dbReference type="Pfam" id="PF07690">
    <property type="entry name" value="MFS_1"/>
    <property type="match status" value="1"/>
</dbReference>
<dbReference type="SUPFAM" id="SSF103473">
    <property type="entry name" value="MFS general substrate transporter"/>
    <property type="match status" value="1"/>
</dbReference>
<dbReference type="PROSITE" id="PS50850">
    <property type="entry name" value="MFS"/>
    <property type="match status" value="1"/>
</dbReference>